<accession>B7LHB8</accession>
<proteinExistence type="inferred from homology"/>
<sequence length="251" mass="28450">MNLNSIPAFDDNYIWVLNDEAGRCLIVDPGDAEPVLNAITANNWQPEAIFLTHHHHDHVGGVKELVEKFPQIVVYGPQETQDKGTTQVVKDGETAFVLGHEFSVIATPGHTLGHICYFSKPYLFCGDTLFSGGCGRLFEGTASQMYQSLNKLSALPDDTLVCCAHEYTLSNMKFALSILPHDLSINDYYRKVKELRAKNQITLPVILKNERQINVFLRTEDIDLINVINEETLLQQPEERFAWLRSKKDRF</sequence>
<name>GLO2_ECO55</name>
<evidence type="ECO:0000255" key="1">
    <source>
        <dbReference type="HAMAP-Rule" id="MF_01374"/>
    </source>
</evidence>
<dbReference type="EC" id="3.1.2.6" evidence="1"/>
<dbReference type="EMBL" id="CU928145">
    <property type="protein sequence ID" value="CAU96091.1"/>
    <property type="molecule type" value="Genomic_DNA"/>
</dbReference>
<dbReference type="RefSeq" id="WP_001052751.1">
    <property type="nucleotide sequence ID" value="NC_011748.1"/>
</dbReference>
<dbReference type="SMR" id="B7LHB8"/>
<dbReference type="KEGG" id="eck:EC55989_0211"/>
<dbReference type="HOGENOM" id="CLU_030571_4_1_6"/>
<dbReference type="UniPathway" id="UPA00619">
    <property type="reaction ID" value="UER00676"/>
</dbReference>
<dbReference type="Proteomes" id="UP000000746">
    <property type="component" value="Chromosome"/>
</dbReference>
<dbReference type="GO" id="GO:0004416">
    <property type="term" value="F:hydroxyacylglutathione hydrolase activity"/>
    <property type="evidence" value="ECO:0007669"/>
    <property type="project" value="UniProtKB-UniRule"/>
</dbReference>
<dbReference type="GO" id="GO:0046872">
    <property type="term" value="F:metal ion binding"/>
    <property type="evidence" value="ECO:0007669"/>
    <property type="project" value="UniProtKB-KW"/>
</dbReference>
<dbReference type="GO" id="GO:0019243">
    <property type="term" value="P:methylglyoxal catabolic process to D-lactate via S-lactoyl-glutathione"/>
    <property type="evidence" value="ECO:0007669"/>
    <property type="project" value="InterPro"/>
</dbReference>
<dbReference type="CDD" id="cd07723">
    <property type="entry name" value="hydroxyacylglutathione_hydrolase_MBL-fold"/>
    <property type="match status" value="1"/>
</dbReference>
<dbReference type="FunFam" id="3.60.15.10:FF:000012">
    <property type="entry name" value="Hydroxyacylglutathione hydrolase"/>
    <property type="match status" value="1"/>
</dbReference>
<dbReference type="Gene3D" id="3.60.15.10">
    <property type="entry name" value="Ribonuclease Z/Hydroxyacylglutathione hydrolase-like"/>
    <property type="match status" value="1"/>
</dbReference>
<dbReference type="HAMAP" id="MF_01374">
    <property type="entry name" value="Glyoxalase_2"/>
    <property type="match status" value="1"/>
</dbReference>
<dbReference type="InterPro" id="IPR035680">
    <property type="entry name" value="Clx_II_MBL"/>
</dbReference>
<dbReference type="InterPro" id="IPR050110">
    <property type="entry name" value="Glyoxalase_II_hydrolase"/>
</dbReference>
<dbReference type="InterPro" id="IPR032282">
    <property type="entry name" value="HAGH_C"/>
</dbReference>
<dbReference type="InterPro" id="IPR017782">
    <property type="entry name" value="Hydroxyacylglutathione_Hdrlase"/>
</dbReference>
<dbReference type="InterPro" id="IPR001279">
    <property type="entry name" value="Metallo-B-lactamas"/>
</dbReference>
<dbReference type="InterPro" id="IPR036866">
    <property type="entry name" value="RibonucZ/Hydroxyglut_hydro"/>
</dbReference>
<dbReference type="NCBIfam" id="TIGR03413">
    <property type="entry name" value="GSH_gloB"/>
    <property type="match status" value="1"/>
</dbReference>
<dbReference type="NCBIfam" id="NF007597">
    <property type="entry name" value="PRK10241.1"/>
    <property type="match status" value="1"/>
</dbReference>
<dbReference type="PANTHER" id="PTHR43705">
    <property type="entry name" value="HYDROXYACYLGLUTATHIONE HYDROLASE"/>
    <property type="match status" value="1"/>
</dbReference>
<dbReference type="PANTHER" id="PTHR43705:SF1">
    <property type="entry name" value="HYDROXYACYLGLUTATHIONE HYDROLASE GLOB"/>
    <property type="match status" value="1"/>
</dbReference>
<dbReference type="Pfam" id="PF16123">
    <property type="entry name" value="HAGH_C"/>
    <property type="match status" value="1"/>
</dbReference>
<dbReference type="Pfam" id="PF00753">
    <property type="entry name" value="Lactamase_B"/>
    <property type="match status" value="1"/>
</dbReference>
<dbReference type="PIRSF" id="PIRSF005457">
    <property type="entry name" value="Glx"/>
    <property type="match status" value="1"/>
</dbReference>
<dbReference type="SMART" id="SM00849">
    <property type="entry name" value="Lactamase_B"/>
    <property type="match status" value="1"/>
</dbReference>
<dbReference type="SUPFAM" id="SSF56281">
    <property type="entry name" value="Metallo-hydrolase/oxidoreductase"/>
    <property type="match status" value="1"/>
</dbReference>
<protein>
    <recommendedName>
        <fullName evidence="1">Hydroxyacylglutathione hydrolase</fullName>
        <ecNumber evidence="1">3.1.2.6</ecNumber>
    </recommendedName>
    <alternativeName>
        <fullName evidence="1">Glyoxalase II</fullName>
        <shortName evidence="1">Glx II</shortName>
    </alternativeName>
</protein>
<feature type="chain" id="PRO_1000184178" description="Hydroxyacylglutathione hydrolase">
    <location>
        <begin position="1"/>
        <end position="251"/>
    </location>
</feature>
<feature type="binding site" evidence="1">
    <location>
        <position position="53"/>
    </location>
    <ligand>
        <name>Zn(2+)</name>
        <dbReference type="ChEBI" id="CHEBI:29105"/>
        <label>1</label>
    </ligand>
</feature>
<feature type="binding site" evidence="1">
    <location>
        <position position="55"/>
    </location>
    <ligand>
        <name>Zn(2+)</name>
        <dbReference type="ChEBI" id="CHEBI:29105"/>
        <label>1</label>
    </ligand>
</feature>
<feature type="binding site" evidence="1">
    <location>
        <position position="57"/>
    </location>
    <ligand>
        <name>Zn(2+)</name>
        <dbReference type="ChEBI" id="CHEBI:29105"/>
        <label>2</label>
    </ligand>
</feature>
<feature type="binding site" evidence="1">
    <location>
        <position position="58"/>
    </location>
    <ligand>
        <name>Zn(2+)</name>
        <dbReference type="ChEBI" id="CHEBI:29105"/>
        <label>2</label>
    </ligand>
</feature>
<feature type="binding site" evidence="1">
    <location>
        <position position="110"/>
    </location>
    <ligand>
        <name>Zn(2+)</name>
        <dbReference type="ChEBI" id="CHEBI:29105"/>
        <label>1</label>
    </ligand>
</feature>
<feature type="binding site" evidence="1">
    <location>
        <position position="127"/>
    </location>
    <ligand>
        <name>Zn(2+)</name>
        <dbReference type="ChEBI" id="CHEBI:29105"/>
        <label>1</label>
    </ligand>
</feature>
<feature type="binding site" evidence="1">
    <location>
        <position position="127"/>
    </location>
    <ligand>
        <name>Zn(2+)</name>
        <dbReference type="ChEBI" id="CHEBI:29105"/>
        <label>2</label>
    </ligand>
</feature>
<feature type="binding site" evidence="1">
    <location>
        <position position="165"/>
    </location>
    <ligand>
        <name>Zn(2+)</name>
        <dbReference type="ChEBI" id="CHEBI:29105"/>
        <label>2</label>
    </ligand>
</feature>
<organism>
    <name type="scientific">Escherichia coli (strain 55989 / EAEC)</name>
    <dbReference type="NCBI Taxonomy" id="585055"/>
    <lineage>
        <taxon>Bacteria</taxon>
        <taxon>Pseudomonadati</taxon>
        <taxon>Pseudomonadota</taxon>
        <taxon>Gammaproteobacteria</taxon>
        <taxon>Enterobacterales</taxon>
        <taxon>Enterobacteriaceae</taxon>
        <taxon>Escherichia</taxon>
    </lineage>
</organism>
<reference key="1">
    <citation type="journal article" date="2009" name="PLoS Genet.">
        <title>Organised genome dynamics in the Escherichia coli species results in highly diverse adaptive paths.</title>
        <authorList>
            <person name="Touchon M."/>
            <person name="Hoede C."/>
            <person name="Tenaillon O."/>
            <person name="Barbe V."/>
            <person name="Baeriswyl S."/>
            <person name="Bidet P."/>
            <person name="Bingen E."/>
            <person name="Bonacorsi S."/>
            <person name="Bouchier C."/>
            <person name="Bouvet O."/>
            <person name="Calteau A."/>
            <person name="Chiapello H."/>
            <person name="Clermont O."/>
            <person name="Cruveiller S."/>
            <person name="Danchin A."/>
            <person name="Diard M."/>
            <person name="Dossat C."/>
            <person name="Karoui M.E."/>
            <person name="Frapy E."/>
            <person name="Garry L."/>
            <person name="Ghigo J.M."/>
            <person name="Gilles A.M."/>
            <person name="Johnson J."/>
            <person name="Le Bouguenec C."/>
            <person name="Lescat M."/>
            <person name="Mangenot S."/>
            <person name="Martinez-Jehanne V."/>
            <person name="Matic I."/>
            <person name="Nassif X."/>
            <person name="Oztas S."/>
            <person name="Petit M.A."/>
            <person name="Pichon C."/>
            <person name="Rouy Z."/>
            <person name="Ruf C.S."/>
            <person name="Schneider D."/>
            <person name="Tourret J."/>
            <person name="Vacherie B."/>
            <person name="Vallenet D."/>
            <person name="Medigue C."/>
            <person name="Rocha E.P.C."/>
            <person name="Denamur E."/>
        </authorList>
    </citation>
    <scope>NUCLEOTIDE SEQUENCE [LARGE SCALE GENOMIC DNA]</scope>
    <source>
        <strain>55989 / EAEC</strain>
    </source>
</reference>
<keyword id="KW-0378">Hydrolase</keyword>
<keyword id="KW-0479">Metal-binding</keyword>
<keyword id="KW-1185">Reference proteome</keyword>
<keyword id="KW-0862">Zinc</keyword>
<comment type="function">
    <text evidence="1">Thiolesterase that catalyzes the hydrolysis of S-D-lactoyl-glutathione to form glutathione and D-lactic acid.</text>
</comment>
<comment type="catalytic activity">
    <reaction evidence="1">
        <text>an S-(2-hydroxyacyl)glutathione + H2O = a 2-hydroxy carboxylate + glutathione + H(+)</text>
        <dbReference type="Rhea" id="RHEA:21864"/>
        <dbReference type="ChEBI" id="CHEBI:15377"/>
        <dbReference type="ChEBI" id="CHEBI:15378"/>
        <dbReference type="ChEBI" id="CHEBI:57925"/>
        <dbReference type="ChEBI" id="CHEBI:58896"/>
        <dbReference type="ChEBI" id="CHEBI:71261"/>
        <dbReference type="EC" id="3.1.2.6"/>
    </reaction>
</comment>
<comment type="cofactor">
    <cofactor evidence="1">
        <name>Zn(2+)</name>
        <dbReference type="ChEBI" id="CHEBI:29105"/>
    </cofactor>
    <text evidence="1">Binds 2 Zn(2+) ions per subunit.</text>
</comment>
<comment type="pathway">
    <text evidence="1">Secondary metabolite metabolism; methylglyoxal degradation; (R)-lactate from methylglyoxal: step 2/2.</text>
</comment>
<comment type="subunit">
    <text evidence="1">Monomer.</text>
</comment>
<comment type="similarity">
    <text evidence="1">Belongs to the metallo-beta-lactamase superfamily. Glyoxalase II family.</text>
</comment>
<gene>
    <name evidence="1" type="primary">gloB</name>
    <name type="ordered locus">EC55989_0211</name>
</gene>